<dbReference type="EC" id="2.7.7.60" evidence="1"/>
<dbReference type="EMBL" id="CP000614">
    <property type="protein sequence ID" value="ABO54873.1"/>
    <property type="molecule type" value="Genomic_DNA"/>
</dbReference>
<dbReference type="SMR" id="A4JF20"/>
<dbReference type="KEGG" id="bvi:Bcep1808_1870"/>
<dbReference type="eggNOG" id="COG1211">
    <property type="taxonomic scope" value="Bacteria"/>
</dbReference>
<dbReference type="HOGENOM" id="CLU_061281_3_0_4"/>
<dbReference type="UniPathway" id="UPA00056">
    <property type="reaction ID" value="UER00093"/>
</dbReference>
<dbReference type="Proteomes" id="UP000002287">
    <property type="component" value="Chromosome 1"/>
</dbReference>
<dbReference type="GO" id="GO:0050518">
    <property type="term" value="F:2-C-methyl-D-erythritol 4-phosphate cytidylyltransferase activity"/>
    <property type="evidence" value="ECO:0007669"/>
    <property type="project" value="UniProtKB-UniRule"/>
</dbReference>
<dbReference type="GO" id="GO:0019288">
    <property type="term" value="P:isopentenyl diphosphate biosynthetic process, methylerythritol 4-phosphate pathway"/>
    <property type="evidence" value="ECO:0007669"/>
    <property type="project" value="UniProtKB-UniRule"/>
</dbReference>
<dbReference type="CDD" id="cd02516">
    <property type="entry name" value="CDP-ME_synthetase"/>
    <property type="match status" value="1"/>
</dbReference>
<dbReference type="FunFam" id="3.90.550.10:FF:000003">
    <property type="entry name" value="2-C-methyl-D-erythritol 4-phosphate cytidylyltransferase"/>
    <property type="match status" value="1"/>
</dbReference>
<dbReference type="Gene3D" id="3.90.550.10">
    <property type="entry name" value="Spore Coat Polysaccharide Biosynthesis Protein SpsA, Chain A"/>
    <property type="match status" value="1"/>
</dbReference>
<dbReference type="HAMAP" id="MF_00108">
    <property type="entry name" value="IspD"/>
    <property type="match status" value="1"/>
</dbReference>
<dbReference type="InterPro" id="IPR001228">
    <property type="entry name" value="IspD"/>
</dbReference>
<dbReference type="InterPro" id="IPR034683">
    <property type="entry name" value="IspD/TarI"/>
</dbReference>
<dbReference type="InterPro" id="IPR050088">
    <property type="entry name" value="IspD/TarI_cytidylyltransf_bact"/>
</dbReference>
<dbReference type="InterPro" id="IPR018294">
    <property type="entry name" value="ISPD_synthase_CS"/>
</dbReference>
<dbReference type="InterPro" id="IPR029044">
    <property type="entry name" value="Nucleotide-diphossugar_trans"/>
</dbReference>
<dbReference type="NCBIfam" id="TIGR00453">
    <property type="entry name" value="ispD"/>
    <property type="match status" value="1"/>
</dbReference>
<dbReference type="PANTHER" id="PTHR32125">
    <property type="entry name" value="2-C-METHYL-D-ERYTHRITOL 4-PHOSPHATE CYTIDYLYLTRANSFERASE, CHLOROPLASTIC"/>
    <property type="match status" value="1"/>
</dbReference>
<dbReference type="PANTHER" id="PTHR32125:SF4">
    <property type="entry name" value="2-C-METHYL-D-ERYTHRITOL 4-PHOSPHATE CYTIDYLYLTRANSFERASE, CHLOROPLASTIC"/>
    <property type="match status" value="1"/>
</dbReference>
<dbReference type="Pfam" id="PF01128">
    <property type="entry name" value="IspD"/>
    <property type="match status" value="1"/>
</dbReference>
<dbReference type="SUPFAM" id="SSF53448">
    <property type="entry name" value="Nucleotide-diphospho-sugar transferases"/>
    <property type="match status" value="1"/>
</dbReference>
<dbReference type="PROSITE" id="PS01295">
    <property type="entry name" value="ISPD"/>
    <property type="match status" value="1"/>
</dbReference>
<name>ISPD_BURVG</name>
<keyword id="KW-0414">Isoprene biosynthesis</keyword>
<keyword id="KW-0548">Nucleotidyltransferase</keyword>
<keyword id="KW-0808">Transferase</keyword>
<feature type="chain" id="PRO_1000022909" description="2-C-methyl-D-erythritol 4-phosphate cytidylyltransferase">
    <location>
        <begin position="1"/>
        <end position="236"/>
    </location>
</feature>
<feature type="site" description="Transition state stabilizer" evidence="1">
    <location>
        <position position="17"/>
    </location>
</feature>
<feature type="site" description="Transition state stabilizer" evidence="1">
    <location>
        <position position="24"/>
    </location>
</feature>
<feature type="site" description="Positions MEP for the nucleophilic attack" evidence="1">
    <location>
        <position position="159"/>
    </location>
</feature>
<feature type="site" description="Positions MEP for the nucleophilic attack" evidence="1">
    <location>
        <position position="215"/>
    </location>
</feature>
<gene>
    <name evidence="1" type="primary">ispD</name>
    <name type="ordered locus">Bcep1808_1870</name>
</gene>
<proteinExistence type="inferred from homology"/>
<protein>
    <recommendedName>
        <fullName evidence="1">2-C-methyl-D-erythritol 4-phosphate cytidylyltransferase</fullName>
        <ecNumber evidence="1">2.7.7.60</ecNumber>
    </recommendedName>
    <alternativeName>
        <fullName evidence="1">4-diphosphocytidyl-2C-methyl-D-erythritol synthase</fullName>
    </alternativeName>
    <alternativeName>
        <fullName evidence="1">MEP cytidylyltransferase</fullName>
        <shortName evidence="1">MCT</shortName>
    </alternativeName>
</protein>
<evidence type="ECO:0000255" key="1">
    <source>
        <dbReference type="HAMAP-Rule" id="MF_00108"/>
    </source>
</evidence>
<sequence length="236" mass="25298">MTPRLFALIPCAGTGSRSGSAVPKQYRTLAGRALLHYTLAAFDACSEFAQTLVVLAPDDTHFDARRFAGLRFAVRRCGGGSRQASVLNGLLGLAEFGATDQDWVLVHDAARPGITPTLIRTLVATLKDDPVGGILALPVADTLKRVPTGGDAIARTESRDALWQAQTPQMFRIGMLRDAILRAQREGHDLTDEASAIEWAGHTPRVVQGSLRNFKVTYPEDFALAEAILAAPAHAS</sequence>
<comment type="function">
    <text evidence="1">Catalyzes the formation of 4-diphosphocytidyl-2-C-methyl-D-erythritol from CTP and 2-C-methyl-D-erythritol 4-phosphate (MEP).</text>
</comment>
<comment type="catalytic activity">
    <reaction evidence="1">
        <text>2-C-methyl-D-erythritol 4-phosphate + CTP + H(+) = 4-CDP-2-C-methyl-D-erythritol + diphosphate</text>
        <dbReference type="Rhea" id="RHEA:13429"/>
        <dbReference type="ChEBI" id="CHEBI:15378"/>
        <dbReference type="ChEBI" id="CHEBI:33019"/>
        <dbReference type="ChEBI" id="CHEBI:37563"/>
        <dbReference type="ChEBI" id="CHEBI:57823"/>
        <dbReference type="ChEBI" id="CHEBI:58262"/>
        <dbReference type="EC" id="2.7.7.60"/>
    </reaction>
</comment>
<comment type="pathway">
    <text evidence="1">Isoprenoid biosynthesis; isopentenyl diphosphate biosynthesis via DXP pathway; isopentenyl diphosphate from 1-deoxy-D-xylulose 5-phosphate: step 2/6.</text>
</comment>
<comment type="similarity">
    <text evidence="1">Belongs to the IspD/TarI cytidylyltransferase family. IspD subfamily.</text>
</comment>
<organism>
    <name type="scientific">Burkholderia vietnamiensis (strain G4 / LMG 22486)</name>
    <name type="common">Burkholderia cepacia (strain R1808)</name>
    <dbReference type="NCBI Taxonomy" id="269482"/>
    <lineage>
        <taxon>Bacteria</taxon>
        <taxon>Pseudomonadati</taxon>
        <taxon>Pseudomonadota</taxon>
        <taxon>Betaproteobacteria</taxon>
        <taxon>Burkholderiales</taxon>
        <taxon>Burkholderiaceae</taxon>
        <taxon>Burkholderia</taxon>
        <taxon>Burkholderia cepacia complex</taxon>
    </lineage>
</organism>
<reference key="1">
    <citation type="submission" date="2007-03" db="EMBL/GenBank/DDBJ databases">
        <title>Complete sequence of chromosome 1 of Burkholderia vietnamiensis G4.</title>
        <authorList>
            <consortium name="US DOE Joint Genome Institute"/>
            <person name="Copeland A."/>
            <person name="Lucas S."/>
            <person name="Lapidus A."/>
            <person name="Barry K."/>
            <person name="Detter J.C."/>
            <person name="Glavina del Rio T."/>
            <person name="Hammon N."/>
            <person name="Israni S."/>
            <person name="Dalin E."/>
            <person name="Tice H."/>
            <person name="Pitluck S."/>
            <person name="Chain P."/>
            <person name="Malfatti S."/>
            <person name="Shin M."/>
            <person name="Vergez L."/>
            <person name="Schmutz J."/>
            <person name="Larimer F."/>
            <person name="Land M."/>
            <person name="Hauser L."/>
            <person name="Kyrpides N."/>
            <person name="Tiedje J."/>
            <person name="Richardson P."/>
        </authorList>
    </citation>
    <scope>NUCLEOTIDE SEQUENCE [LARGE SCALE GENOMIC DNA]</scope>
    <source>
        <strain>G4 / LMG 22486</strain>
    </source>
</reference>
<accession>A4JF20</accession>